<accession>Q4WP54</accession>
<evidence type="ECO:0000250" key="1"/>
<evidence type="ECO:0000255" key="2">
    <source>
        <dbReference type="PROSITE-ProRule" id="PRU01234"/>
    </source>
</evidence>
<evidence type="ECO:0000256" key="3">
    <source>
        <dbReference type="SAM" id="MobiDB-lite"/>
    </source>
</evidence>
<evidence type="ECO:0000305" key="4"/>
<name>RTC5_ASPFU</name>
<feature type="chain" id="PRO_0000408816" description="Restriction of telomere capping protein 5">
    <location>
        <begin position="1"/>
        <end position="642"/>
    </location>
</feature>
<feature type="domain" description="TLDc" evidence="2">
    <location>
        <begin position="354"/>
        <end position="570"/>
    </location>
</feature>
<feature type="region of interest" description="Disordered" evidence="3">
    <location>
        <begin position="322"/>
        <end position="343"/>
    </location>
</feature>
<dbReference type="EMBL" id="AAHF01000005">
    <property type="protein sequence ID" value="EAL89980.2"/>
    <property type="molecule type" value="Genomic_DNA"/>
</dbReference>
<dbReference type="RefSeq" id="XP_752018.2">
    <property type="nucleotide sequence ID" value="XM_746925.2"/>
</dbReference>
<dbReference type="STRING" id="330879.Q4WP54"/>
<dbReference type="EnsemblFungi" id="EAL89980">
    <property type="protein sequence ID" value="EAL89980"/>
    <property type="gene ID" value="AFUA_4G08080"/>
</dbReference>
<dbReference type="GeneID" id="3508952"/>
<dbReference type="KEGG" id="afm:AFUA_4G08080"/>
<dbReference type="VEuPathDB" id="FungiDB:Afu4g08080"/>
<dbReference type="eggNOG" id="ENOG502QV3R">
    <property type="taxonomic scope" value="Eukaryota"/>
</dbReference>
<dbReference type="HOGENOM" id="CLU_011918_1_0_1"/>
<dbReference type="InParanoid" id="Q4WP54"/>
<dbReference type="OMA" id="KWEFEAR"/>
<dbReference type="OrthoDB" id="289228at2759"/>
<dbReference type="Proteomes" id="UP000002530">
    <property type="component" value="Chromosome 4"/>
</dbReference>
<dbReference type="GO" id="GO:0005737">
    <property type="term" value="C:cytoplasm"/>
    <property type="evidence" value="ECO:0007669"/>
    <property type="project" value="UniProtKB-SubCell"/>
</dbReference>
<dbReference type="GO" id="GO:0005634">
    <property type="term" value="C:nucleus"/>
    <property type="evidence" value="ECO:0000318"/>
    <property type="project" value="GO_Central"/>
</dbReference>
<dbReference type="GO" id="GO:0006979">
    <property type="term" value="P:response to oxidative stress"/>
    <property type="evidence" value="ECO:0000318"/>
    <property type="project" value="GO_Central"/>
</dbReference>
<dbReference type="InterPro" id="IPR006571">
    <property type="entry name" value="TLDc_dom"/>
</dbReference>
<dbReference type="Pfam" id="PF07534">
    <property type="entry name" value="TLD"/>
    <property type="match status" value="1"/>
</dbReference>
<dbReference type="SMART" id="SM00584">
    <property type="entry name" value="TLDc"/>
    <property type="match status" value="1"/>
</dbReference>
<dbReference type="PROSITE" id="PS51886">
    <property type="entry name" value="TLDC"/>
    <property type="match status" value="1"/>
</dbReference>
<comment type="function">
    <text evidence="1">May be involved in a process influencing telomere capping.</text>
</comment>
<comment type="subcellular location">
    <subcellularLocation>
        <location evidence="1">Cytoplasm</location>
    </subcellularLocation>
</comment>
<comment type="similarity">
    <text evidence="4">Belongs to the RTC5 family.</text>
</comment>
<keyword id="KW-0963">Cytoplasm</keyword>
<keyword id="KW-1185">Reference proteome</keyword>
<sequence length="642" mass="69814">MGVGQSTELPGHVGTPEHLSHVLAERFATKCFTPLELTHFKDNFFSRAIDQGGLKYWNEKILSDFLGIPDSSDSHCPLDAGPVIFRMVSYLGAFPFQNTLAPSVLTFEAMVKVAVLLTERYGRVLRRGRKDRIKLLFGSLADVGRRNVSTSPDTEDVCRETDDTVKPHVTGFEVDAPANDDYGDEDEDEDDDDLALAALESLDAIDVFKHDSRVDKKVYEARISVATLRRLLMLFLVIAPLKTLEPVTLYTSDLNEARMESIRKEADTILAAFSTEDSDGGISYRSFANITSTALPYLFDPLTPLFEHLLFSKNLDMTKKSRSDATVTDTIEKPSDSPGPSPSTIVLPGGFESSILKPSVVSHLSFFLPSPTSNANLLRGNMRLHPVFSTAVHGSSLTSFSHNVLTWNAGTLLLLEGAVSESSEHGEGMVTLGAYLPQPWKSAPLSHSSTKPSDSSALPCLFELSPKHQLLQGNPSPSVQKPNAPVAYFSTSTGIAIGCQIPPPSRSQLLTPTPLGAGSLTVDTSLESATFYMSSIGHNGVFLPPATTSMSEETVRKQIDIYTMEIWGLVPDPSDTSSSDLSRQSPVELQRAKWEFEAREAERRRNLNLKAGAGDPAAEGARWLLETAGLIGDRPGQRGGSL</sequence>
<proteinExistence type="inferred from homology"/>
<gene>
    <name type="primary">rtc5</name>
    <name type="ORF">AFUA_4G08080</name>
</gene>
<reference key="1">
    <citation type="journal article" date="2005" name="Nature">
        <title>Genomic sequence of the pathogenic and allergenic filamentous fungus Aspergillus fumigatus.</title>
        <authorList>
            <person name="Nierman W.C."/>
            <person name="Pain A."/>
            <person name="Anderson M.J."/>
            <person name="Wortman J.R."/>
            <person name="Kim H.S."/>
            <person name="Arroyo J."/>
            <person name="Berriman M."/>
            <person name="Abe K."/>
            <person name="Archer D.B."/>
            <person name="Bermejo C."/>
            <person name="Bennett J.W."/>
            <person name="Bowyer P."/>
            <person name="Chen D."/>
            <person name="Collins M."/>
            <person name="Coulsen R."/>
            <person name="Davies R."/>
            <person name="Dyer P.S."/>
            <person name="Farman M.L."/>
            <person name="Fedorova N."/>
            <person name="Fedorova N.D."/>
            <person name="Feldblyum T.V."/>
            <person name="Fischer R."/>
            <person name="Fosker N."/>
            <person name="Fraser A."/>
            <person name="Garcia J.L."/>
            <person name="Garcia M.J."/>
            <person name="Goble A."/>
            <person name="Goldman G.H."/>
            <person name="Gomi K."/>
            <person name="Griffith-Jones S."/>
            <person name="Gwilliam R."/>
            <person name="Haas B.J."/>
            <person name="Haas H."/>
            <person name="Harris D.E."/>
            <person name="Horiuchi H."/>
            <person name="Huang J."/>
            <person name="Humphray S."/>
            <person name="Jimenez J."/>
            <person name="Keller N."/>
            <person name="Khouri H."/>
            <person name="Kitamoto K."/>
            <person name="Kobayashi T."/>
            <person name="Konzack S."/>
            <person name="Kulkarni R."/>
            <person name="Kumagai T."/>
            <person name="Lafton A."/>
            <person name="Latge J.-P."/>
            <person name="Li W."/>
            <person name="Lord A."/>
            <person name="Lu C."/>
            <person name="Majoros W.H."/>
            <person name="May G.S."/>
            <person name="Miller B.L."/>
            <person name="Mohamoud Y."/>
            <person name="Molina M."/>
            <person name="Monod M."/>
            <person name="Mouyna I."/>
            <person name="Mulligan S."/>
            <person name="Murphy L.D."/>
            <person name="O'Neil S."/>
            <person name="Paulsen I."/>
            <person name="Penalva M.A."/>
            <person name="Pertea M."/>
            <person name="Price C."/>
            <person name="Pritchard B.L."/>
            <person name="Quail M.A."/>
            <person name="Rabbinowitsch E."/>
            <person name="Rawlins N."/>
            <person name="Rajandream M.A."/>
            <person name="Reichard U."/>
            <person name="Renauld H."/>
            <person name="Robson G.D."/>
            <person name="Rodriguez de Cordoba S."/>
            <person name="Rodriguez-Pena J.M."/>
            <person name="Ronning C.M."/>
            <person name="Rutter S."/>
            <person name="Salzberg S.L."/>
            <person name="Sanchez M."/>
            <person name="Sanchez-Ferrero J.C."/>
            <person name="Saunders D."/>
            <person name="Seeger K."/>
            <person name="Squares R."/>
            <person name="Squares S."/>
            <person name="Takeuchi M."/>
            <person name="Tekaia F."/>
            <person name="Turner G."/>
            <person name="Vazquez de Aldana C.R."/>
            <person name="Weidman J."/>
            <person name="White O."/>
            <person name="Woodward J.R."/>
            <person name="Yu J.-H."/>
            <person name="Fraser C.M."/>
            <person name="Galagan J.E."/>
            <person name="Asai K."/>
            <person name="Machida M."/>
            <person name="Hall N."/>
            <person name="Barrell B.G."/>
            <person name="Denning D.W."/>
        </authorList>
    </citation>
    <scope>NUCLEOTIDE SEQUENCE [LARGE SCALE GENOMIC DNA]</scope>
    <source>
        <strain>ATCC MYA-4609 / CBS 101355 / FGSC A1100 / Af293</strain>
    </source>
</reference>
<organism>
    <name type="scientific">Aspergillus fumigatus (strain ATCC MYA-4609 / CBS 101355 / FGSC A1100 / Af293)</name>
    <name type="common">Neosartorya fumigata</name>
    <dbReference type="NCBI Taxonomy" id="330879"/>
    <lineage>
        <taxon>Eukaryota</taxon>
        <taxon>Fungi</taxon>
        <taxon>Dikarya</taxon>
        <taxon>Ascomycota</taxon>
        <taxon>Pezizomycotina</taxon>
        <taxon>Eurotiomycetes</taxon>
        <taxon>Eurotiomycetidae</taxon>
        <taxon>Eurotiales</taxon>
        <taxon>Aspergillaceae</taxon>
        <taxon>Aspergillus</taxon>
        <taxon>Aspergillus subgen. Fumigati</taxon>
    </lineage>
</organism>
<protein>
    <recommendedName>
        <fullName>Restriction of telomere capping protein 5</fullName>
    </recommendedName>
</protein>